<gene>
    <name evidence="1" type="primary">rplD</name>
    <name type="ordered locus">AYWB_521</name>
</gene>
<protein>
    <recommendedName>
        <fullName evidence="1">Large ribosomal subunit protein uL4</fullName>
    </recommendedName>
    <alternativeName>
        <fullName evidence="3">50S ribosomal protein L4</fullName>
    </alternativeName>
</protein>
<dbReference type="EMBL" id="CP000061">
    <property type="protein sequence ID" value="ABC65638.1"/>
    <property type="molecule type" value="Genomic_DNA"/>
</dbReference>
<dbReference type="RefSeq" id="WP_011412800.1">
    <property type="nucleotide sequence ID" value="NC_007716.1"/>
</dbReference>
<dbReference type="SMR" id="Q2NIV5"/>
<dbReference type="STRING" id="322098.AYWB_521"/>
<dbReference type="KEGG" id="ayw:AYWB_521"/>
<dbReference type="eggNOG" id="COG0088">
    <property type="taxonomic scope" value="Bacteria"/>
</dbReference>
<dbReference type="HOGENOM" id="CLU_041575_5_2_14"/>
<dbReference type="OrthoDB" id="9803201at2"/>
<dbReference type="PhylomeDB" id="Q2NIV5"/>
<dbReference type="Proteomes" id="UP000001934">
    <property type="component" value="Chromosome"/>
</dbReference>
<dbReference type="GO" id="GO:1990904">
    <property type="term" value="C:ribonucleoprotein complex"/>
    <property type="evidence" value="ECO:0007669"/>
    <property type="project" value="UniProtKB-KW"/>
</dbReference>
<dbReference type="GO" id="GO:0005840">
    <property type="term" value="C:ribosome"/>
    <property type="evidence" value="ECO:0007669"/>
    <property type="project" value="UniProtKB-KW"/>
</dbReference>
<dbReference type="GO" id="GO:0019843">
    <property type="term" value="F:rRNA binding"/>
    <property type="evidence" value="ECO:0007669"/>
    <property type="project" value="UniProtKB-UniRule"/>
</dbReference>
<dbReference type="GO" id="GO:0003735">
    <property type="term" value="F:structural constituent of ribosome"/>
    <property type="evidence" value="ECO:0007669"/>
    <property type="project" value="InterPro"/>
</dbReference>
<dbReference type="GO" id="GO:0006412">
    <property type="term" value="P:translation"/>
    <property type="evidence" value="ECO:0007669"/>
    <property type="project" value="UniProtKB-UniRule"/>
</dbReference>
<dbReference type="Gene3D" id="3.40.1370.10">
    <property type="match status" value="1"/>
</dbReference>
<dbReference type="HAMAP" id="MF_01328_B">
    <property type="entry name" value="Ribosomal_uL4_B"/>
    <property type="match status" value="1"/>
</dbReference>
<dbReference type="InterPro" id="IPR002136">
    <property type="entry name" value="Ribosomal_uL4"/>
</dbReference>
<dbReference type="InterPro" id="IPR013005">
    <property type="entry name" value="Ribosomal_uL4-like"/>
</dbReference>
<dbReference type="InterPro" id="IPR023574">
    <property type="entry name" value="Ribosomal_uL4_dom_sf"/>
</dbReference>
<dbReference type="NCBIfam" id="TIGR03953">
    <property type="entry name" value="rplD_bact"/>
    <property type="match status" value="1"/>
</dbReference>
<dbReference type="PANTHER" id="PTHR10746">
    <property type="entry name" value="50S RIBOSOMAL PROTEIN L4"/>
    <property type="match status" value="1"/>
</dbReference>
<dbReference type="PANTHER" id="PTHR10746:SF6">
    <property type="entry name" value="LARGE RIBOSOMAL SUBUNIT PROTEIN UL4M"/>
    <property type="match status" value="1"/>
</dbReference>
<dbReference type="Pfam" id="PF00573">
    <property type="entry name" value="Ribosomal_L4"/>
    <property type="match status" value="1"/>
</dbReference>
<dbReference type="SUPFAM" id="SSF52166">
    <property type="entry name" value="Ribosomal protein L4"/>
    <property type="match status" value="1"/>
</dbReference>
<feature type="chain" id="PRO_0000242335" description="Large ribosomal subunit protein uL4">
    <location>
        <begin position="1"/>
        <end position="207"/>
    </location>
</feature>
<feature type="region of interest" description="Disordered" evidence="2">
    <location>
        <begin position="58"/>
        <end position="78"/>
    </location>
</feature>
<feature type="compositionally biased region" description="Basic residues" evidence="2">
    <location>
        <begin position="63"/>
        <end position="77"/>
    </location>
</feature>
<name>RL4_AYWBP</name>
<keyword id="KW-0687">Ribonucleoprotein</keyword>
<keyword id="KW-0689">Ribosomal protein</keyword>
<keyword id="KW-0694">RNA-binding</keyword>
<keyword id="KW-0699">rRNA-binding</keyword>
<sequence length="207" mass="22935">MPKINILNQQGDLVSEKVLATTVFDIKPNQQVLYDVVNAQRAAMRQGTHATKTRALVAGGGKKPWRQKGTGRARHGSIRSPLWRGGGVTFGPSPRNYSVKVNQKVRILALKSALSLQVQNNQLVVLDNINLATHKTKDFQQMLQKLNITSKSLIVVTQMTEQLALASRNLSYITLETASHASVYQILNCKQLVLTADAVNYFEEVLK</sequence>
<organism>
    <name type="scientific">Aster yellows witches'-broom phytoplasma (strain AYWB)</name>
    <dbReference type="NCBI Taxonomy" id="322098"/>
    <lineage>
        <taxon>Bacteria</taxon>
        <taxon>Bacillati</taxon>
        <taxon>Mycoplasmatota</taxon>
        <taxon>Mollicutes</taxon>
        <taxon>Acholeplasmatales</taxon>
        <taxon>Acholeplasmataceae</taxon>
        <taxon>Candidatus Phytoplasma</taxon>
        <taxon>16SrI (Aster yellows group)</taxon>
    </lineage>
</organism>
<evidence type="ECO:0000255" key="1">
    <source>
        <dbReference type="HAMAP-Rule" id="MF_01328"/>
    </source>
</evidence>
<evidence type="ECO:0000256" key="2">
    <source>
        <dbReference type="SAM" id="MobiDB-lite"/>
    </source>
</evidence>
<evidence type="ECO:0000305" key="3"/>
<accession>Q2NIV5</accession>
<proteinExistence type="inferred from homology"/>
<comment type="function">
    <text evidence="1">One of the primary rRNA binding proteins, this protein initially binds near the 5'-end of the 23S rRNA. It is important during the early stages of 50S assembly. It makes multiple contacts with different domains of the 23S rRNA in the assembled 50S subunit and ribosome.</text>
</comment>
<comment type="function">
    <text evidence="1">Forms part of the polypeptide exit tunnel.</text>
</comment>
<comment type="subunit">
    <text evidence="1">Part of the 50S ribosomal subunit.</text>
</comment>
<comment type="similarity">
    <text evidence="1">Belongs to the universal ribosomal protein uL4 family.</text>
</comment>
<reference key="1">
    <citation type="journal article" date="2006" name="J. Bacteriol.">
        <title>Living with genome instability: the adaptation of phytoplasmas to diverse environments of their insect and plant hosts.</title>
        <authorList>
            <person name="Bai X."/>
            <person name="Zhang J."/>
            <person name="Ewing A."/>
            <person name="Miller S.A."/>
            <person name="Jancso Radek A."/>
            <person name="Shevchenko D.V."/>
            <person name="Tsukerman K."/>
            <person name="Walunas T."/>
            <person name="Lapidus A."/>
            <person name="Campbell J.W."/>
            <person name="Hogenhout S.A."/>
        </authorList>
    </citation>
    <scope>NUCLEOTIDE SEQUENCE [LARGE SCALE GENOMIC DNA]</scope>
    <source>
        <strain>AYWB</strain>
    </source>
</reference>